<comment type="catalytic activity">
    <reaction evidence="1">
        <text>ATP + H2O = ADP + phosphate + H(+)</text>
        <dbReference type="Rhea" id="RHEA:13065"/>
        <dbReference type="ChEBI" id="CHEBI:15377"/>
        <dbReference type="ChEBI" id="CHEBI:15378"/>
        <dbReference type="ChEBI" id="CHEBI:30616"/>
        <dbReference type="ChEBI" id="CHEBI:43474"/>
        <dbReference type="ChEBI" id="CHEBI:456216"/>
    </reaction>
</comment>
<comment type="cofactor">
    <cofactor evidence="1">
        <name>Mg(2+)</name>
        <dbReference type="ChEBI" id="CHEBI:18420"/>
    </cofactor>
</comment>
<comment type="induction">
    <text evidence="3">Induced in roots by salt stress.</text>
</comment>
<comment type="similarity">
    <text evidence="4">Belongs to the AAA ATPase family. BCS1 subfamily.</text>
</comment>
<comment type="sequence caution" evidence="4">
    <conflict type="erroneous initiation">
        <sequence resource="EMBL-CDS" id="BAB02175"/>
    </conflict>
    <text>Truncated N-terminus.</text>
</comment>
<protein>
    <recommendedName>
        <fullName>AAA-ATPase At3g28600</fullName>
        <ecNumber evidence="1">3.6.1.-</ecNumber>
    </recommendedName>
</protein>
<feature type="signal peptide" evidence="2">
    <location>
        <begin position="1"/>
        <end position="26"/>
    </location>
</feature>
<feature type="chain" id="PRO_0000434712" description="AAA-ATPase At3g28600" evidence="2">
    <location>
        <begin position="27"/>
        <end position="477"/>
    </location>
</feature>
<feature type="binding site" evidence="2">
    <location>
        <begin position="245"/>
        <end position="252"/>
    </location>
    <ligand>
        <name>ATP</name>
        <dbReference type="ChEBI" id="CHEBI:30616"/>
    </ligand>
</feature>
<reference key="1">
    <citation type="journal article" date="2000" name="DNA Res.">
        <title>Structural analysis of Arabidopsis thaliana chromosome 3. I. Sequence features of the regions of 4,504,864 bp covered by sixty P1 and TAC clones.</title>
        <authorList>
            <person name="Sato S."/>
            <person name="Nakamura Y."/>
            <person name="Kaneko T."/>
            <person name="Katoh T."/>
            <person name="Asamizu E."/>
            <person name="Tabata S."/>
        </authorList>
    </citation>
    <scope>NUCLEOTIDE SEQUENCE [LARGE SCALE GENOMIC DNA]</scope>
    <source>
        <strain>cv. Columbia</strain>
    </source>
</reference>
<reference key="2">
    <citation type="journal article" date="2017" name="Plant J.">
        <title>Araport11: a complete reannotation of the Arabidopsis thaliana reference genome.</title>
        <authorList>
            <person name="Cheng C.Y."/>
            <person name="Krishnakumar V."/>
            <person name="Chan A.P."/>
            <person name="Thibaud-Nissen F."/>
            <person name="Schobel S."/>
            <person name="Town C.D."/>
        </authorList>
    </citation>
    <scope>GENOME REANNOTATION</scope>
    <source>
        <strain>cv. Columbia</strain>
    </source>
</reference>
<reference key="3">
    <citation type="journal article" date="2006" name="J. Exp. Bot.">
        <title>Dissecting salt stress pathways.</title>
        <authorList>
            <person name="Ma S."/>
            <person name="Gong Q."/>
            <person name="Bohnert H.J."/>
        </authorList>
    </citation>
    <scope>INDUCTION BY SALT</scope>
    <source>
        <strain>cv. Columbia</strain>
    </source>
</reference>
<dbReference type="EC" id="3.6.1.-" evidence="1"/>
<dbReference type="EMBL" id="AP000420">
    <property type="protein sequence ID" value="BAB02175.1"/>
    <property type="status" value="ALT_INIT"/>
    <property type="molecule type" value="Genomic_DNA"/>
</dbReference>
<dbReference type="EMBL" id="CP002686">
    <property type="protein sequence ID" value="AEE77464.1"/>
    <property type="molecule type" value="Genomic_DNA"/>
</dbReference>
<dbReference type="RefSeq" id="NP_189501.2">
    <property type="nucleotide sequence ID" value="NM_113780.4"/>
</dbReference>
<dbReference type="SMR" id="F4J0C0"/>
<dbReference type="FunCoup" id="F4J0C0">
    <property type="interactions" value="1323"/>
</dbReference>
<dbReference type="STRING" id="3702.F4J0C0"/>
<dbReference type="iPTMnet" id="F4J0C0"/>
<dbReference type="PaxDb" id="3702-AT3G28600.1"/>
<dbReference type="ProteomicsDB" id="244345"/>
<dbReference type="DNASU" id="822490"/>
<dbReference type="EnsemblPlants" id="AT3G28600.1">
    <property type="protein sequence ID" value="AT3G28600.1"/>
    <property type="gene ID" value="AT3G28600"/>
</dbReference>
<dbReference type="GeneID" id="822490"/>
<dbReference type="Gramene" id="AT3G28600.1">
    <property type="protein sequence ID" value="AT3G28600.1"/>
    <property type="gene ID" value="AT3G28600"/>
</dbReference>
<dbReference type="KEGG" id="ath:AT3G28600"/>
<dbReference type="Araport" id="AT3G28600"/>
<dbReference type="TAIR" id="AT3G28600"/>
<dbReference type="eggNOG" id="KOG0743">
    <property type="taxonomic scope" value="Eukaryota"/>
</dbReference>
<dbReference type="HOGENOM" id="CLU_010189_0_1_1"/>
<dbReference type="InParanoid" id="F4J0C0"/>
<dbReference type="OMA" id="RRYESPW"/>
<dbReference type="PRO" id="PR:F4J0C0"/>
<dbReference type="Proteomes" id="UP000006548">
    <property type="component" value="Chromosome 3"/>
</dbReference>
<dbReference type="ExpressionAtlas" id="F4J0C0">
    <property type="expression patterns" value="baseline and differential"/>
</dbReference>
<dbReference type="GO" id="GO:0005524">
    <property type="term" value="F:ATP binding"/>
    <property type="evidence" value="ECO:0007669"/>
    <property type="project" value="UniProtKB-KW"/>
</dbReference>
<dbReference type="GO" id="GO:0016887">
    <property type="term" value="F:ATP hydrolysis activity"/>
    <property type="evidence" value="ECO:0007669"/>
    <property type="project" value="InterPro"/>
</dbReference>
<dbReference type="GO" id="GO:0009651">
    <property type="term" value="P:response to salt stress"/>
    <property type="evidence" value="ECO:0000270"/>
    <property type="project" value="UniProtKB"/>
</dbReference>
<dbReference type="CDD" id="cd19510">
    <property type="entry name" value="RecA-like_BCS1"/>
    <property type="match status" value="1"/>
</dbReference>
<dbReference type="FunFam" id="3.40.50.300:FF:001122">
    <property type="entry name" value="AAA-ATPase ASD, mitochondrial"/>
    <property type="match status" value="1"/>
</dbReference>
<dbReference type="Gene3D" id="6.10.280.40">
    <property type="match status" value="1"/>
</dbReference>
<dbReference type="Gene3D" id="3.40.50.300">
    <property type="entry name" value="P-loop containing nucleotide triphosphate hydrolases"/>
    <property type="match status" value="1"/>
</dbReference>
<dbReference type="InterPro" id="IPR003593">
    <property type="entry name" value="AAA+_ATPase"/>
</dbReference>
<dbReference type="InterPro" id="IPR025753">
    <property type="entry name" value="AAA_N_dom"/>
</dbReference>
<dbReference type="InterPro" id="IPR003959">
    <property type="entry name" value="ATPase_AAA_core"/>
</dbReference>
<dbReference type="InterPro" id="IPR003960">
    <property type="entry name" value="ATPase_AAA_CS"/>
</dbReference>
<dbReference type="InterPro" id="IPR050747">
    <property type="entry name" value="Mitochondrial_chaperone_BCS1"/>
</dbReference>
<dbReference type="InterPro" id="IPR027417">
    <property type="entry name" value="P-loop_NTPase"/>
</dbReference>
<dbReference type="PANTHER" id="PTHR23070">
    <property type="entry name" value="BCS1 AAA-TYPE ATPASE"/>
    <property type="match status" value="1"/>
</dbReference>
<dbReference type="Pfam" id="PF00004">
    <property type="entry name" value="AAA"/>
    <property type="match status" value="1"/>
</dbReference>
<dbReference type="Pfam" id="PF14363">
    <property type="entry name" value="AAA_assoc"/>
    <property type="match status" value="1"/>
</dbReference>
<dbReference type="SMART" id="SM00382">
    <property type="entry name" value="AAA"/>
    <property type="match status" value="1"/>
</dbReference>
<dbReference type="SUPFAM" id="SSF52540">
    <property type="entry name" value="P-loop containing nucleoside triphosphate hydrolases"/>
    <property type="match status" value="1"/>
</dbReference>
<dbReference type="PROSITE" id="PS00674">
    <property type="entry name" value="AAA"/>
    <property type="match status" value="1"/>
</dbReference>
<accession>F4J0C0</accession>
<accession>Q9LJJ6</accession>
<evidence type="ECO:0000250" key="1">
    <source>
        <dbReference type="UniProtKB" id="Q9FLD5"/>
    </source>
</evidence>
<evidence type="ECO:0000255" key="2"/>
<evidence type="ECO:0000269" key="3">
    <source>
    </source>
</evidence>
<evidence type="ECO:0000305" key="4"/>
<evidence type="ECO:0000312" key="5">
    <source>
        <dbReference type="EMBL" id="AEE77464.1"/>
    </source>
</evidence>
<evidence type="ECO:0000312" key="6">
    <source>
        <dbReference type="EMBL" id="BAB02175.1"/>
    </source>
</evidence>
<evidence type="ECO:0000312" key="7">
    <source>
        <dbReference type="Proteomes" id="UP000006548"/>
    </source>
</evidence>
<organism evidence="7">
    <name type="scientific">Arabidopsis thaliana</name>
    <name type="common">Mouse-ear cress</name>
    <dbReference type="NCBI Taxonomy" id="3702"/>
    <lineage>
        <taxon>Eukaryota</taxon>
        <taxon>Viridiplantae</taxon>
        <taxon>Streptophyta</taxon>
        <taxon>Embryophyta</taxon>
        <taxon>Tracheophyta</taxon>
        <taxon>Spermatophyta</taxon>
        <taxon>Magnoliopsida</taxon>
        <taxon>eudicotyledons</taxon>
        <taxon>Gunneridae</taxon>
        <taxon>Pentapetalae</taxon>
        <taxon>rosids</taxon>
        <taxon>malvids</taxon>
        <taxon>Brassicales</taxon>
        <taxon>Brassicaceae</taxon>
        <taxon>Camelineae</taxon>
        <taxon>Arabidopsis</taxon>
    </lineage>
</organism>
<sequence>MMMGNTFGSSLASLFFLWATIQQIFPNHLRIAIKEFLISTIQQLSFVQRFSDRFINFFSPYVEISFSQYEDYQFNHAFAAIETYLGAKATDKAKHLRASQVKESKGLVLKRDETKVRDEYEGGTVWWEMETDSTGYRTFKLTFHRRSRDIVTDSYIKYVFEEGKSIQAKSKQMKLFTNNPSSHWGTSKKSFWRYIDFEHPASFHTLAMDTKKKEEILNDLAAFSNGKEYYKKIGKAWKRGYLLHGPPGTGKSTMIAAMANHLNYSIYDLELTAIRNNSELRKLLTATSSKSIIVIEDIDCSLDLTGKRKKEKNLMTSREDGEQGTEEDKSFVTLSGLLNFIDGIWSACGQERIIIFTTNHFEKLDPALIRRGRMDMHIELSYCSFEAFKILAKNYLDLDTHPLFKKIESLLKETKIAPADVAENLMKKNTEIDADGSLKDLIQALEGKKKIHGAQVDEPKDKYTKKFYKAFCMSSKA</sequence>
<name>AATPA_ARATH</name>
<keyword id="KW-0067">ATP-binding</keyword>
<keyword id="KW-0378">Hydrolase</keyword>
<keyword id="KW-0460">Magnesium</keyword>
<keyword id="KW-0547">Nucleotide-binding</keyword>
<keyword id="KW-1185">Reference proteome</keyword>
<keyword id="KW-0732">Signal</keyword>
<gene>
    <name evidence="5" type="ordered locus">At3g28600</name>
    <name evidence="6" type="ORF">MZN14.6</name>
</gene>
<proteinExistence type="evidence at transcript level"/>